<protein>
    <recommendedName>
        <fullName evidence="1">Exodeoxyribonuclease 7 large subunit</fullName>
        <ecNumber evidence="1">3.1.11.6</ecNumber>
    </recommendedName>
    <alternativeName>
        <fullName evidence="1">Exodeoxyribonuclease VII large subunit</fullName>
        <shortName evidence="1">Exonuclease VII large subunit</shortName>
    </alternativeName>
</protein>
<keyword id="KW-0963">Cytoplasm</keyword>
<keyword id="KW-0269">Exonuclease</keyword>
<keyword id="KW-0378">Hydrolase</keyword>
<keyword id="KW-0540">Nuclease</keyword>
<keyword id="KW-1185">Reference proteome</keyword>
<feature type="chain" id="PRO_1000079983" description="Exodeoxyribonuclease 7 large subunit">
    <location>
        <begin position="1"/>
        <end position="406"/>
    </location>
</feature>
<reference key="1">
    <citation type="journal article" date="2006" name="J. Bacteriol.">
        <title>Complete genome sequence of the dehalorespiring bacterium Desulfitobacterium hafniense Y51 and comparison with Dehalococcoides ethenogenes 195.</title>
        <authorList>
            <person name="Nonaka H."/>
            <person name="Keresztes G."/>
            <person name="Shinoda Y."/>
            <person name="Ikenaga Y."/>
            <person name="Abe M."/>
            <person name="Naito K."/>
            <person name="Inatomi K."/>
            <person name="Furukawa K."/>
            <person name="Inui M."/>
            <person name="Yukawa H."/>
        </authorList>
    </citation>
    <scope>NUCLEOTIDE SEQUENCE [LARGE SCALE GENOMIC DNA]</scope>
    <source>
        <strain>Y51</strain>
    </source>
</reference>
<gene>
    <name evidence="1" type="primary">xseA</name>
    <name type="ordered locus">DSY2353</name>
</gene>
<dbReference type="EC" id="3.1.11.6" evidence="1"/>
<dbReference type="EMBL" id="AP008230">
    <property type="protein sequence ID" value="BAE84142.1"/>
    <property type="molecule type" value="Genomic_DNA"/>
</dbReference>
<dbReference type="SMR" id="Q24V00"/>
<dbReference type="STRING" id="138119.DSY2353"/>
<dbReference type="KEGG" id="dsy:DSY2353"/>
<dbReference type="eggNOG" id="COG1570">
    <property type="taxonomic scope" value="Bacteria"/>
</dbReference>
<dbReference type="HOGENOM" id="CLU_023625_3_1_9"/>
<dbReference type="Proteomes" id="UP000001946">
    <property type="component" value="Chromosome"/>
</dbReference>
<dbReference type="GO" id="GO:0005737">
    <property type="term" value="C:cytoplasm"/>
    <property type="evidence" value="ECO:0007669"/>
    <property type="project" value="UniProtKB-SubCell"/>
</dbReference>
<dbReference type="GO" id="GO:0009318">
    <property type="term" value="C:exodeoxyribonuclease VII complex"/>
    <property type="evidence" value="ECO:0007669"/>
    <property type="project" value="InterPro"/>
</dbReference>
<dbReference type="GO" id="GO:0008855">
    <property type="term" value="F:exodeoxyribonuclease VII activity"/>
    <property type="evidence" value="ECO:0007669"/>
    <property type="project" value="UniProtKB-UniRule"/>
</dbReference>
<dbReference type="GO" id="GO:0003676">
    <property type="term" value="F:nucleic acid binding"/>
    <property type="evidence" value="ECO:0007669"/>
    <property type="project" value="InterPro"/>
</dbReference>
<dbReference type="GO" id="GO:0006308">
    <property type="term" value="P:DNA catabolic process"/>
    <property type="evidence" value="ECO:0007669"/>
    <property type="project" value="UniProtKB-UniRule"/>
</dbReference>
<dbReference type="CDD" id="cd04489">
    <property type="entry name" value="ExoVII_LU_OBF"/>
    <property type="match status" value="1"/>
</dbReference>
<dbReference type="HAMAP" id="MF_00378">
    <property type="entry name" value="Exonuc_7_L"/>
    <property type="match status" value="1"/>
</dbReference>
<dbReference type="InterPro" id="IPR003753">
    <property type="entry name" value="Exonuc_VII_L"/>
</dbReference>
<dbReference type="InterPro" id="IPR020579">
    <property type="entry name" value="Exonuc_VII_lsu_C"/>
</dbReference>
<dbReference type="InterPro" id="IPR025824">
    <property type="entry name" value="OB-fold_nuc-bd_dom"/>
</dbReference>
<dbReference type="NCBIfam" id="TIGR00237">
    <property type="entry name" value="xseA"/>
    <property type="match status" value="1"/>
</dbReference>
<dbReference type="PANTHER" id="PTHR30008">
    <property type="entry name" value="EXODEOXYRIBONUCLEASE 7 LARGE SUBUNIT"/>
    <property type="match status" value="1"/>
</dbReference>
<dbReference type="PANTHER" id="PTHR30008:SF0">
    <property type="entry name" value="EXODEOXYRIBONUCLEASE 7 LARGE SUBUNIT"/>
    <property type="match status" value="1"/>
</dbReference>
<dbReference type="Pfam" id="PF02601">
    <property type="entry name" value="Exonuc_VII_L"/>
    <property type="match status" value="2"/>
</dbReference>
<dbReference type="Pfam" id="PF13742">
    <property type="entry name" value="tRNA_anti_2"/>
    <property type="match status" value="1"/>
</dbReference>
<name>EX7L_DESHY</name>
<sequence length="406" mass="45261">MKNVPKIWTVAELTREIGQTLNDNPDFVNCWVSGEISNYKNHRPSGHWYFTLKDEQSSMKGVMFRSRAERVRFTPQDGMKVLVRGSIRIYERDGTIQLYAEEMQPSGVGALYLAFEQLKERLGQEGLFAPERKKAIPRYPRRIGIVTSPTGAAIKDILKVMFRRNPQISWILAPAAVQGELAPKEVAQAIARLNRHSQVDVIIVGRGGGSLEELWAFNTEEVARAIAASGIPVISAVGHETDVTIADMVADLRAPTPSAAAELAVPVWRELKSDLEQLEARLHSTMSSQLQRKRQRLDSLKTIGPLSNPFWRIDQNRQRLDSLSERVEQGMTRFVSDKNGILKLLTAKLDLLSPLAILGRGYSLTYGPKGNVLRKSDDINVGQQVQVRLQQGILTCAVLAKSVDSD</sequence>
<organism>
    <name type="scientific">Desulfitobacterium hafniense (strain Y51)</name>
    <dbReference type="NCBI Taxonomy" id="138119"/>
    <lineage>
        <taxon>Bacteria</taxon>
        <taxon>Bacillati</taxon>
        <taxon>Bacillota</taxon>
        <taxon>Clostridia</taxon>
        <taxon>Eubacteriales</taxon>
        <taxon>Desulfitobacteriaceae</taxon>
        <taxon>Desulfitobacterium</taxon>
    </lineage>
</organism>
<accession>Q24V00</accession>
<comment type="function">
    <text evidence="1">Bidirectionally degrades single-stranded DNA into large acid-insoluble oligonucleotides, which are then degraded further into small acid-soluble oligonucleotides.</text>
</comment>
<comment type="catalytic activity">
    <reaction evidence="1">
        <text>Exonucleolytic cleavage in either 5'- to 3'- or 3'- to 5'-direction to yield nucleoside 5'-phosphates.</text>
        <dbReference type="EC" id="3.1.11.6"/>
    </reaction>
</comment>
<comment type="subunit">
    <text evidence="1">Heterooligomer composed of large and small subunits.</text>
</comment>
<comment type="subcellular location">
    <subcellularLocation>
        <location evidence="1">Cytoplasm</location>
    </subcellularLocation>
</comment>
<comment type="similarity">
    <text evidence="1">Belongs to the XseA family.</text>
</comment>
<proteinExistence type="inferred from homology"/>
<evidence type="ECO:0000255" key="1">
    <source>
        <dbReference type="HAMAP-Rule" id="MF_00378"/>
    </source>
</evidence>